<organism>
    <name type="scientific">Neisseria meningitidis serogroup B (strain ATCC BAA-335 / MC58)</name>
    <dbReference type="NCBI Taxonomy" id="122586"/>
    <lineage>
        <taxon>Bacteria</taxon>
        <taxon>Pseudomonadati</taxon>
        <taxon>Pseudomonadota</taxon>
        <taxon>Betaproteobacteria</taxon>
        <taxon>Neisseriales</taxon>
        <taxon>Neisseriaceae</taxon>
        <taxon>Neisseria</taxon>
    </lineage>
</organism>
<accession>Q9K0D4</accession>
<keyword id="KW-0028">Amino-acid biosynthesis</keyword>
<keyword id="KW-0057">Aromatic amino acid biosynthesis</keyword>
<keyword id="KW-0456">Lyase</keyword>
<keyword id="KW-1185">Reference proteome</keyword>
<keyword id="KW-0822">Tryptophan biosynthesis</keyword>
<gene>
    <name evidence="1" type="primary">trpA</name>
    <name type="ordered locus">NMB0678</name>
</gene>
<reference key="1">
    <citation type="journal article" date="2000" name="Science">
        <title>Complete genome sequence of Neisseria meningitidis serogroup B strain MC58.</title>
        <authorList>
            <person name="Tettelin H."/>
            <person name="Saunders N.J."/>
            <person name="Heidelberg J.F."/>
            <person name="Jeffries A.C."/>
            <person name="Nelson K.E."/>
            <person name="Eisen J.A."/>
            <person name="Ketchum K.A."/>
            <person name="Hood D.W."/>
            <person name="Peden J.F."/>
            <person name="Dodson R.J."/>
            <person name="Nelson W.C."/>
            <person name="Gwinn M.L."/>
            <person name="DeBoy R.T."/>
            <person name="Peterson J.D."/>
            <person name="Hickey E.K."/>
            <person name="Haft D.H."/>
            <person name="Salzberg S.L."/>
            <person name="White O."/>
            <person name="Fleischmann R.D."/>
            <person name="Dougherty B.A."/>
            <person name="Mason T.M."/>
            <person name="Ciecko A."/>
            <person name="Parksey D.S."/>
            <person name="Blair E."/>
            <person name="Cittone H."/>
            <person name="Clark E.B."/>
            <person name="Cotton M.D."/>
            <person name="Utterback T.R."/>
            <person name="Khouri H.M."/>
            <person name="Qin H."/>
            <person name="Vamathevan J.J."/>
            <person name="Gill J."/>
            <person name="Scarlato V."/>
            <person name="Masignani V."/>
            <person name="Pizza M."/>
            <person name="Grandi G."/>
            <person name="Sun L."/>
            <person name="Smith H.O."/>
            <person name="Fraser C.M."/>
            <person name="Moxon E.R."/>
            <person name="Rappuoli R."/>
            <person name="Venter J.C."/>
        </authorList>
    </citation>
    <scope>NUCLEOTIDE SEQUENCE [LARGE SCALE GENOMIC DNA]</scope>
    <source>
        <strain>ATCC BAA-335 / MC58</strain>
    </source>
</reference>
<dbReference type="EC" id="4.2.1.20" evidence="1"/>
<dbReference type="EMBL" id="AE002098">
    <property type="protein sequence ID" value="AAF41096.1"/>
    <property type="molecule type" value="Genomic_DNA"/>
</dbReference>
<dbReference type="PIR" id="D81171">
    <property type="entry name" value="D81171"/>
</dbReference>
<dbReference type="RefSeq" id="NP_273720.1">
    <property type="nucleotide sequence ID" value="NC_003112.2"/>
</dbReference>
<dbReference type="RefSeq" id="WP_010980825.1">
    <property type="nucleotide sequence ID" value="NC_003112.2"/>
</dbReference>
<dbReference type="SMR" id="Q9K0D4"/>
<dbReference type="FunCoup" id="Q9K0D4">
    <property type="interactions" value="503"/>
</dbReference>
<dbReference type="STRING" id="122586.NMB0678"/>
<dbReference type="PaxDb" id="122586-NMB0678"/>
<dbReference type="KEGG" id="nme:NMB0678"/>
<dbReference type="PATRIC" id="fig|122586.8.peg.850"/>
<dbReference type="HOGENOM" id="CLU_016734_0_0_4"/>
<dbReference type="InParanoid" id="Q9K0D4"/>
<dbReference type="OrthoDB" id="9804578at2"/>
<dbReference type="UniPathway" id="UPA00035">
    <property type="reaction ID" value="UER00044"/>
</dbReference>
<dbReference type="Proteomes" id="UP000000425">
    <property type="component" value="Chromosome"/>
</dbReference>
<dbReference type="GO" id="GO:0005829">
    <property type="term" value="C:cytosol"/>
    <property type="evidence" value="ECO:0000318"/>
    <property type="project" value="GO_Central"/>
</dbReference>
<dbReference type="GO" id="GO:0004834">
    <property type="term" value="F:tryptophan synthase activity"/>
    <property type="evidence" value="ECO:0000318"/>
    <property type="project" value="GO_Central"/>
</dbReference>
<dbReference type="GO" id="GO:0000162">
    <property type="term" value="P:L-tryptophan biosynthetic process"/>
    <property type="evidence" value="ECO:0000318"/>
    <property type="project" value="GO_Central"/>
</dbReference>
<dbReference type="CDD" id="cd04724">
    <property type="entry name" value="Tryptophan_synthase_alpha"/>
    <property type="match status" value="1"/>
</dbReference>
<dbReference type="FunFam" id="3.20.20.70:FF:000037">
    <property type="entry name" value="Tryptophan synthase alpha chain"/>
    <property type="match status" value="1"/>
</dbReference>
<dbReference type="Gene3D" id="3.20.20.70">
    <property type="entry name" value="Aldolase class I"/>
    <property type="match status" value="1"/>
</dbReference>
<dbReference type="HAMAP" id="MF_00131">
    <property type="entry name" value="Trp_synth_alpha"/>
    <property type="match status" value="1"/>
</dbReference>
<dbReference type="InterPro" id="IPR013785">
    <property type="entry name" value="Aldolase_TIM"/>
</dbReference>
<dbReference type="InterPro" id="IPR011060">
    <property type="entry name" value="RibuloseP-bd_barrel"/>
</dbReference>
<dbReference type="InterPro" id="IPR018204">
    <property type="entry name" value="Trp_synthase_alpha_AS"/>
</dbReference>
<dbReference type="InterPro" id="IPR002028">
    <property type="entry name" value="Trp_synthase_suA"/>
</dbReference>
<dbReference type="NCBIfam" id="TIGR00262">
    <property type="entry name" value="trpA"/>
    <property type="match status" value="1"/>
</dbReference>
<dbReference type="PANTHER" id="PTHR43406:SF1">
    <property type="entry name" value="TRYPTOPHAN SYNTHASE ALPHA CHAIN, CHLOROPLASTIC"/>
    <property type="match status" value="1"/>
</dbReference>
<dbReference type="PANTHER" id="PTHR43406">
    <property type="entry name" value="TRYPTOPHAN SYNTHASE, ALPHA CHAIN"/>
    <property type="match status" value="1"/>
</dbReference>
<dbReference type="Pfam" id="PF00290">
    <property type="entry name" value="Trp_syntA"/>
    <property type="match status" value="1"/>
</dbReference>
<dbReference type="SUPFAM" id="SSF51366">
    <property type="entry name" value="Ribulose-phoshate binding barrel"/>
    <property type="match status" value="1"/>
</dbReference>
<dbReference type="PROSITE" id="PS00167">
    <property type="entry name" value="TRP_SYNTHASE_ALPHA"/>
    <property type="match status" value="1"/>
</dbReference>
<evidence type="ECO:0000255" key="1">
    <source>
        <dbReference type="HAMAP-Rule" id="MF_00131"/>
    </source>
</evidence>
<protein>
    <recommendedName>
        <fullName evidence="1">Tryptophan synthase alpha chain</fullName>
        <ecNumber evidence="1">4.2.1.20</ecNumber>
    </recommendedName>
</protein>
<feature type="chain" id="PRO_0000098815" description="Tryptophan synthase alpha chain">
    <location>
        <begin position="1"/>
        <end position="261"/>
    </location>
</feature>
<feature type="active site" description="Proton acceptor" evidence="1">
    <location>
        <position position="47"/>
    </location>
</feature>
<feature type="active site" description="Proton acceptor" evidence="1">
    <location>
        <position position="58"/>
    </location>
</feature>
<proteinExistence type="inferred from homology"/>
<comment type="function">
    <text evidence="1">The alpha subunit is responsible for the aldol cleavage of indoleglycerol phosphate to indole and glyceraldehyde 3-phosphate.</text>
</comment>
<comment type="catalytic activity">
    <reaction evidence="1">
        <text>(1S,2R)-1-C-(indol-3-yl)glycerol 3-phosphate + L-serine = D-glyceraldehyde 3-phosphate + L-tryptophan + H2O</text>
        <dbReference type="Rhea" id="RHEA:10532"/>
        <dbReference type="ChEBI" id="CHEBI:15377"/>
        <dbReference type="ChEBI" id="CHEBI:33384"/>
        <dbReference type="ChEBI" id="CHEBI:57912"/>
        <dbReference type="ChEBI" id="CHEBI:58866"/>
        <dbReference type="ChEBI" id="CHEBI:59776"/>
        <dbReference type="EC" id="4.2.1.20"/>
    </reaction>
</comment>
<comment type="pathway">
    <text evidence="1">Amino-acid biosynthesis; L-tryptophan biosynthesis; L-tryptophan from chorismate: step 5/5.</text>
</comment>
<comment type="subunit">
    <text evidence="1">Tetramer of two alpha and two beta chains.</text>
</comment>
<comment type="similarity">
    <text evidence="1">Belongs to the TrpA family.</text>
</comment>
<name>TRPA_NEIMB</name>
<sequence>MSRIRQAFAALDGGKALIAYITVGDPDIRTTLALMHGMVANGADILELGVPFSDPMADGPVIQRAAERALANGISLRDVLDVVRKFRETDTQTPVVLMGYLNPVHKMGYREFAQEAAKAGVDGVLTVDSPVETIDPLYRELKDNGVDCIFLIAPTTTEDRIKTIAELAGGFVYYVSLKGVTGAASLDTDEVSRKIEYLHQYIDIPIGVGFGISNAESARKIGRVADAVIVGSRIVKEIENNTGNEAAAVGALVKELKDAVR</sequence>